<sequence length="331" mass="36641">MTYELSTDREFDLIAIGRACIDLNAVEYNRPMEETMTFSKYVGGSPANIVIGSSKLGLKAGFIGKIADDQHGRFIESYMRGVGVDTSNLVVDQEGHKTGLAFTEIKSPEECSILMYRQDVADLYLSPEEVNEAYIRRSKLLLVSGTALSKSPSREAVLKAIRLAKRNDVKVVFELDYRPYSWETPEETAVYYSLVAEQSDIVIGTREEFDVLENRTEKGDNDETIRYLFKHSPELIVIKHGVEGSFAYTKAGEAYRGYAYKTKVLKTFGAGDSYASAFLYALISGKGIETALKYGSASASIVVSKHSSSDAMPSVEEIEALIEKDETITIA</sequence>
<keyword id="KW-0002">3D-structure</keyword>
<keyword id="KW-0067">ATP-binding</keyword>
<keyword id="KW-0418">Kinase</keyword>
<keyword id="KW-0547">Nucleotide-binding</keyword>
<keyword id="KW-1185">Reference proteome</keyword>
<keyword id="KW-0808">Transferase</keyword>
<evidence type="ECO:0000255" key="1">
    <source>
        <dbReference type="HAMAP-Rule" id="MF_01668"/>
    </source>
</evidence>
<evidence type="ECO:0007829" key="2">
    <source>
        <dbReference type="PDB" id="2QCV"/>
    </source>
</evidence>
<proteinExistence type="evidence at protein level"/>
<feature type="chain" id="PRO_0000352289" description="5-dehydro-2-deoxygluconokinase">
    <location>
        <begin position="1"/>
        <end position="331"/>
    </location>
</feature>
<feature type="strand" evidence="2">
    <location>
        <begin position="10"/>
        <end position="17"/>
    </location>
</feature>
<feature type="strand" evidence="2">
    <location>
        <begin position="20"/>
        <end position="27"/>
    </location>
</feature>
<feature type="helix" evidence="2">
    <location>
        <begin position="32"/>
        <end position="34"/>
    </location>
</feature>
<feature type="strand" evidence="2">
    <location>
        <begin position="38"/>
        <end position="44"/>
    </location>
</feature>
<feature type="helix" evidence="2">
    <location>
        <begin position="45"/>
        <end position="55"/>
    </location>
</feature>
<feature type="strand" evidence="2">
    <location>
        <begin position="60"/>
        <end position="66"/>
    </location>
</feature>
<feature type="helix" evidence="2">
    <location>
        <begin position="70"/>
        <end position="81"/>
    </location>
</feature>
<feature type="strand" evidence="2">
    <location>
        <begin position="89"/>
        <end position="91"/>
    </location>
</feature>
<feature type="strand" evidence="2">
    <location>
        <begin position="100"/>
        <end position="107"/>
    </location>
</feature>
<feature type="strand" evidence="2">
    <location>
        <begin position="110"/>
        <end position="116"/>
    </location>
</feature>
<feature type="helix" evidence="2">
    <location>
        <begin position="121"/>
        <end position="124"/>
    </location>
</feature>
<feature type="helix" evidence="2">
    <location>
        <begin position="127"/>
        <end position="129"/>
    </location>
</feature>
<feature type="helix" evidence="2">
    <location>
        <begin position="132"/>
        <end position="135"/>
    </location>
</feature>
<feature type="strand" evidence="2">
    <location>
        <begin position="138"/>
        <end position="144"/>
    </location>
</feature>
<feature type="helix" evidence="2">
    <location>
        <begin position="145"/>
        <end position="148"/>
    </location>
</feature>
<feature type="helix" evidence="2">
    <location>
        <begin position="153"/>
        <end position="166"/>
    </location>
</feature>
<feature type="strand" evidence="2">
    <location>
        <begin position="170"/>
        <end position="174"/>
    </location>
</feature>
<feature type="helix" evidence="2">
    <location>
        <begin position="179"/>
        <end position="181"/>
    </location>
</feature>
<feature type="helix" evidence="2">
    <location>
        <begin position="185"/>
        <end position="198"/>
    </location>
</feature>
<feature type="strand" evidence="2">
    <location>
        <begin position="200"/>
        <end position="205"/>
    </location>
</feature>
<feature type="helix" evidence="2">
    <location>
        <begin position="206"/>
        <end position="212"/>
    </location>
</feature>
<feature type="helix" evidence="2">
    <location>
        <begin position="221"/>
        <end position="228"/>
    </location>
</feature>
<feature type="strand" evidence="2">
    <location>
        <begin position="234"/>
        <end position="239"/>
    </location>
</feature>
<feature type="helix" evidence="2">
    <location>
        <begin position="241"/>
        <end position="243"/>
    </location>
</feature>
<feature type="strand" evidence="2">
    <location>
        <begin position="245"/>
        <end position="249"/>
    </location>
</feature>
<feature type="strand" evidence="2">
    <location>
        <begin position="254"/>
        <end position="257"/>
    </location>
</feature>
<feature type="helix" evidence="2">
    <location>
        <begin position="270"/>
        <end position="283"/>
    </location>
</feature>
<feature type="helix" evidence="2">
    <location>
        <begin position="288"/>
        <end position="304"/>
    </location>
</feature>
<feature type="helix" evidence="2">
    <location>
        <begin position="315"/>
        <end position="324"/>
    </location>
</feature>
<organism>
    <name type="scientific">Halalkalibacterium halodurans (strain ATCC BAA-125 / DSM 18197 / FERM 7344 / JCM 9153 / C-125)</name>
    <name type="common">Bacillus halodurans</name>
    <dbReference type="NCBI Taxonomy" id="272558"/>
    <lineage>
        <taxon>Bacteria</taxon>
        <taxon>Bacillati</taxon>
        <taxon>Bacillota</taxon>
        <taxon>Bacilli</taxon>
        <taxon>Bacillales</taxon>
        <taxon>Bacillaceae</taxon>
        <taxon>Halalkalibacterium (ex Joshi et al. 2022)</taxon>
    </lineage>
</organism>
<dbReference type="EC" id="2.7.1.92" evidence="1"/>
<dbReference type="EMBL" id="BA000004">
    <property type="protein sequence ID" value="BAB06038.1"/>
    <property type="molecule type" value="Genomic_DNA"/>
</dbReference>
<dbReference type="PIR" id="G83939">
    <property type="entry name" value="G83939"/>
</dbReference>
<dbReference type="RefSeq" id="WP_010898475.1">
    <property type="nucleotide sequence ID" value="NC_002570.2"/>
</dbReference>
<dbReference type="PDB" id="2QCV">
    <property type="method" value="X-ray"/>
    <property type="resolution" value="1.90 A"/>
    <property type="chains" value="A=1-331"/>
</dbReference>
<dbReference type="PDBsum" id="2QCV"/>
<dbReference type="SMR" id="Q9KAG8"/>
<dbReference type="STRING" id="272558.gene:10728217"/>
<dbReference type="GeneID" id="87597854"/>
<dbReference type="KEGG" id="bha:BH2319"/>
<dbReference type="eggNOG" id="COG0524">
    <property type="taxonomic scope" value="Bacteria"/>
</dbReference>
<dbReference type="HOGENOM" id="CLU_027634_6_0_9"/>
<dbReference type="OrthoDB" id="9813569at2"/>
<dbReference type="UniPathway" id="UPA00076">
    <property type="reaction ID" value="UER00146"/>
</dbReference>
<dbReference type="EvolutionaryTrace" id="Q9KAG8"/>
<dbReference type="Proteomes" id="UP000001258">
    <property type="component" value="Chromosome"/>
</dbReference>
<dbReference type="GO" id="GO:0047590">
    <property type="term" value="F:5-dehydro-2-deoxygluconokinase activity"/>
    <property type="evidence" value="ECO:0007669"/>
    <property type="project" value="UniProtKB-UniRule"/>
</dbReference>
<dbReference type="GO" id="GO:0005524">
    <property type="term" value="F:ATP binding"/>
    <property type="evidence" value="ECO:0007669"/>
    <property type="project" value="UniProtKB-UniRule"/>
</dbReference>
<dbReference type="GO" id="GO:0019310">
    <property type="term" value="P:inositol catabolic process"/>
    <property type="evidence" value="ECO:0007669"/>
    <property type="project" value="UniProtKB-UniRule"/>
</dbReference>
<dbReference type="CDD" id="cd01166">
    <property type="entry name" value="KdgK"/>
    <property type="match status" value="1"/>
</dbReference>
<dbReference type="Gene3D" id="3.40.1190.20">
    <property type="match status" value="1"/>
</dbReference>
<dbReference type="Gene3D" id="2.20.150.10">
    <property type="entry name" value="putative 5-dehydro-2- deoxygluconokinase"/>
    <property type="match status" value="1"/>
</dbReference>
<dbReference type="HAMAP" id="MF_01668">
    <property type="entry name" value="IolC"/>
    <property type="match status" value="1"/>
</dbReference>
<dbReference type="InterPro" id="IPR002173">
    <property type="entry name" value="Carboh/pur_kinase_PfkB_CS"/>
</dbReference>
<dbReference type="InterPro" id="IPR022841">
    <property type="entry name" value="DKG_kinase_firmi"/>
</dbReference>
<dbReference type="InterPro" id="IPR030830">
    <property type="entry name" value="Myo_inos_IolC"/>
</dbReference>
<dbReference type="InterPro" id="IPR023314">
    <property type="entry name" value="Myo_inos_IolC-like_sf"/>
</dbReference>
<dbReference type="InterPro" id="IPR050306">
    <property type="entry name" value="PfkB_Carbo_kinase"/>
</dbReference>
<dbReference type="InterPro" id="IPR011611">
    <property type="entry name" value="PfkB_dom"/>
</dbReference>
<dbReference type="InterPro" id="IPR029056">
    <property type="entry name" value="Ribokinase-like"/>
</dbReference>
<dbReference type="NCBIfam" id="TIGR04382">
    <property type="entry name" value="myo_inos_iolC_N"/>
    <property type="match status" value="1"/>
</dbReference>
<dbReference type="PANTHER" id="PTHR43085:SF49">
    <property type="entry name" value="5-DEHYDRO-2-DEOXYGLUCONOKINASE"/>
    <property type="match status" value="1"/>
</dbReference>
<dbReference type="PANTHER" id="PTHR43085">
    <property type="entry name" value="HEXOKINASE FAMILY MEMBER"/>
    <property type="match status" value="1"/>
</dbReference>
<dbReference type="Pfam" id="PF00294">
    <property type="entry name" value="PfkB"/>
    <property type="match status" value="1"/>
</dbReference>
<dbReference type="SUPFAM" id="SSF53613">
    <property type="entry name" value="Ribokinase-like"/>
    <property type="match status" value="1"/>
</dbReference>
<dbReference type="PROSITE" id="PS00584">
    <property type="entry name" value="PFKB_KINASES_2"/>
    <property type="match status" value="1"/>
</dbReference>
<protein>
    <recommendedName>
        <fullName evidence="1">5-dehydro-2-deoxygluconokinase</fullName>
        <ecNumber evidence="1">2.7.1.92</ecNumber>
    </recommendedName>
    <alternativeName>
        <fullName evidence="1">2-deoxy-5-keto-D-gluconate kinase</fullName>
        <shortName evidence="1">DKG kinase</shortName>
    </alternativeName>
</protein>
<gene>
    <name evidence="1" type="primary">iolC</name>
    <name type="ordered locus">BH2319</name>
</gene>
<reference key="1">
    <citation type="journal article" date="2000" name="Nucleic Acids Res.">
        <title>Complete genome sequence of the alkaliphilic bacterium Bacillus halodurans and genomic sequence comparison with Bacillus subtilis.</title>
        <authorList>
            <person name="Takami H."/>
            <person name="Nakasone K."/>
            <person name="Takaki Y."/>
            <person name="Maeno G."/>
            <person name="Sasaki R."/>
            <person name="Masui N."/>
            <person name="Fuji F."/>
            <person name="Hirama C."/>
            <person name="Nakamura Y."/>
            <person name="Ogasawara N."/>
            <person name="Kuhara S."/>
            <person name="Horikoshi K."/>
        </authorList>
    </citation>
    <scope>NUCLEOTIDE SEQUENCE [LARGE SCALE GENOMIC DNA]</scope>
    <source>
        <strain>ATCC BAA-125 / DSM 18197 / FERM 7344 / JCM 9153 / C-125</strain>
    </source>
</reference>
<reference key="2">
    <citation type="submission" date="2007-08" db="PDB data bank">
        <title>Crystal structure of a putative 5-dehydro-2-deoxygluconokinase (np_243185.1) from Bacillus halodurans at 1.90 a resolution.</title>
        <authorList>
            <consortium name="Joint center for structural genomics (JCSG)"/>
        </authorList>
    </citation>
    <scope>X-RAY CRYSTALLOGRAPHY (1.9 ANGSTROMS)</scope>
</reference>
<accession>Q9KAG8</accession>
<comment type="function">
    <text evidence="1">Catalyzes the phosphorylation of 5-dehydro-2-deoxy-D-gluconate (2-deoxy-5-keto-D-gluconate or DKG) to 6-phospho-5-dehydro-2-deoxy-D-gluconate (DKGP).</text>
</comment>
<comment type="catalytic activity">
    <reaction evidence="1">
        <text>5-dehydro-2-deoxy-D-gluconate + ATP = 6-phospho-5-dehydro-2-deoxy-D-gluconate + ADP + H(+)</text>
        <dbReference type="Rhea" id="RHEA:13497"/>
        <dbReference type="ChEBI" id="CHEBI:15378"/>
        <dbReference type="ChEBI" id="CHEBI:16669"/>
        <dbReference type="ChEBI" id="CHEBI:30616"/>
        <dbReference type="ChEBI" id="CHEBI:57949"/>
        <dbReference type="ChEBI" id="CHEBI:456216"/>
        <dbReference type="EC" id="2.7.1.92"/>
    </reaction>
</comment>
<comment type="pathway">
    <text evidence="1">Polyol metabolism; myo-inositol degradation into acetyl-CoA; acetyl-CoA from myo-inositol: step 5/7.</text>
</comment>
<comment type="similarity">
    <text evidence="1">Belongs to the carbohydrate kinase PfkB family.</text>
</comment>
<name>IOLC_HALH5</name>